<evidence type="ECO:0000255" key="1">
    <source>
        <dbReference type="HAMAP-Rule" id="MF_00331"/>
    </source>
</evidence>
<reference key="1">
    <citation type="journal article" date="2006" name="Nat. Biotechnol.">
        <title>Complete genome sequence of the entomopathogenic and metabolically versatile soil bacterium Pseudomonas entomophila.</title>
        <authorList>
            <person name="Vodovar N."/>
            <person name="Vallenet D."/>
            <person name="Cruveiller S."/>
            <person name="Rouy Z."/>
            <person name="Barbe V."/>
            <person name="Acosta C."/>
            <person name="Cattolico L."/>
            <person name="Jubin C."/>
            <person name="Lajus A."/>
            <person name="Segurens B."/>
            <person name="Vacherie B."/>
            <person name="Wincker P."/>
            <person name="Weissenbach J."/>
            <person name="Lemaitre B."/>
            <person name="Medigue C."/>
            <person name="Boccard F."/>
        </authorList>
    </citation>
    <scope>NUCLEOTIDE SEQUENCE [LARGE SCALE GENOMIC DNA]</scope>
    <source>
        <strain>L48</strain>
    </source>
</reference>
<name>ISCS_PSEE4</name>
<comment type="function">
    <text evidence="1">Master enzyme that delivers sulfur to a number of partners involved in Fe-S cluster assembly, tRNA modification or cofactor biosynthesis. Catalyzes the removal of elemental sulfur atoms from cysteine to produce alanine. Functions as a sulfur delivery protein for Fe-S cluster synthesis onto IscU, an Fe-S scaffold assembly protein, as well as other S acceptor proteins.</text>
</comment>
<comment type="catalytic activity">
    <reaction evidence="1">
        <text>(sulfur carrier)-H + L-cysteine = (sulfur carrier)-SH + L-alanine</text>
        <dbReference type="Rhea" id="RHEA:43892"/>
        <dbReference type="Rhea" id="RHEA-COMP:14737"/>
        <dbReference type="Rhea" id="RHEA-COMP:14739"/>
        <dbReference type="ChEBI" id="CHEBI:29917"/>
        <dbReference type="ChEBI" id="CHEBI:35235"/>
        <dbReference type="ChEBI" id="CHEBI:57972"/>
        <dbReference type="ChEBI" id="CHEBI:64428"/>
        <dbReference type="EC" id="2.8.1.7"/>
    </reaction>
</comment>
<comment type="cofactor">
    <cofactor evidence="1">
        <name>pyridoxal 5'-phosphate</name>
        <dbReference type="ChEBI" id="CHEBI:597326"/>
    </cofactor>
</comment>
<comment type="pathway">
    <text evidence="1">Cofactor biosynthesis; iron-sulfur cluster biosynthesis.</text>
</comment>
<comment type="subunit">
    <text evidence="1">Homodimer. Forms a heterotetramer with IscU, interacts with other sulfur acceptors.</text>
</comment>
<comment type="subcellular location">
    <subcellularLocation>
        <location evidence="1">Cytoplasm</location>
    </subcellularLocation>
</comment>
<comment type="similarity">
    <text evidence="1">Belongs to the class-V pyridoxal-phosphate-dependent aminotransferase family. NifS/IscS subfamily.</text>
</comment>
<feature type="chain" id="PRO_1000019424" description="Cysteine desulfurase IscS">
    <location>
        <begin position="1"/>
        <end position="404"/>
    </location>
</feature>
<feature type="active site" description="Cysteine persulfide intermediate" evidence="1">
    <location>
        <position position="328"/>
    </location>
</feature>
<feature type="binding site" evidence="1">
    <location>
        <begin position="75"/>
        <end position="76"/>
    </location>
    <ligand>
        <name>pyridoxal 5'-phosphate</name>
        <dbReference type="ChEBI" id="CHEBI:597326"/>
    </ligand>
</feature>
<feature type="binding site" evidence="1">
    <location>
        <position position="155"/>
    </location>
    <ligand>
        <name>pyridoxal 5'-phosphate</name>
        <dbReference type="ChEBI" id="CHEBI:597326"/>
    </ligand>
</feature>
<feature type="binding site" evidence="1">
    <location>
        <position position="183"/>
    </location>
    <ligand>
        <name>pyridoxal 5'-phosphate</name>
        <dbReference type="ChEBI" id="CHEBI:597326"/>
    </ligand>
</feature>
<feature type="binding site" evidence="1">
    <location>
        <begin position="203"/>
        <end position="205"/>
    </location>
    <ligand>
        <name>pyridoxal 5'-phosphate</name>
        <dbReference type="ChEBI" id="CHEBI:597326"/>
    </ligand>
</feature>
<feature type="binding site" evidence="1">
    <location>
        <position position="243"/>
    </location>
    <ligand>
        <name>pyridoxal 5'-phosphate</name>
        <dbReference type="ChEBI" id="CHEBI:597326"/>
    </ligand>
</feature>
<feature type="binding site" description="via persulfide group" evidence="1">
    <location>
        <position position="328"/>
    </location>
    <ligand>
        <name>[2Fe-2S] cluster</name>
        <dbReference type="ChEBI" id="CHEBI:190135"/>
        <note>ligand shared with IscU</note>
    </ligand>
</feature>
<feature type="modified residue" description="N6-(pyridoxal phosphate)lysine" evidence="1">
    <location>
        <position position="206"/>
    </location>
</feature>
<proteinExistence type="inferred from homology"/>
<organism>
    <name type="scientific">Pseudomonas entomophila (strain L48)</name>
    <dbReference type="NCBI Taxonomy" id="384676"/>
    <lineage>
        <taxon>Bacteria</taxon>
        <taxon>Pseudomonadati</taxon>
        <taxon>Pseudomonadota</taxon>
        <taxon>Gammaproteobacteria</taxon>
        <taxon>Pseudomonadales</taxon>
        <taxon>Pseudomonadaceae</taxon>
        <taxon>Pseudomonas</taxon>
    </lineage>
</organism>
<keyword id="KW-0001">2Fe-2S</keyword>
<keyword id="KW-0963">Cytoplasm</keyword>
<keyword id="KW-0408">Iron</keyword>
<keyword id="KW-0411">Iron-sulfur</keyword>
<keyword id="KW-0479">Metal-binding</keyword>
<keyword id="KW-0663">Pyridoxal phosphate</keyword>
<keyword id="KW-0808">Transferase</keyword>
<sequence>MKLPIYLDYSATTPVDPRVAQKMAECLLVDGNFGNPASRSHVFGWKAEEAVENGRRQVAELINADPREIVWTSGATESDNLALKGVAHFYQTKGKHIITSKIEHKAVLDTARQLEREGFEVTYLEPGEDGIVTPAMVEAALRDDTILVSLMHVNNEVGSINDIAAIGELTRSRGVLFHVDAAQSAGKVEIDVQKLKVDLMSFSAHKVYGPKGIGALYVSRKPRVRLEAIIHGGGHERGMRSGTLPTHQIVGMGEAFAIAKQEMAAENVRIKALSDRFFKQVSDLEELYVNGSQTARVPHNLNLSFNYVEGESLLMSLKDIAVSSGSACTSASLEPSYVLRALGRNDELAHSSIRFSFGRFTTEEEVDYAAQEVCKAVNKLRELSPLWDMYKDGVDISKIEWAAH</sequence>
<gene>
    <name evidence="1" type="primary">iscS</name>
    <name type="ordered locus">PSEEN1010</name>
</gene>
<accession>Q1IEJ2</accession>
<dbReference type="EC" id="2.8.1.7" evidence="1"/>
<dbReference type="EMBL" id="CT573326">
    <property type="protein sequence ID" value="CAK13913.1"/>
    <property type="molecule type" value="Genomic_DNA"/>
</dbReference>
<dbReference type="RefSeq" id="WP_011532336.1">
    <property type="nucleotide sequence ID" value="NC_008027.1"/>
</dbReference>
<dbReference type="SMR" id="Q1IEJ2"/>
<dbReference type="STRING" id="384676.PSEEN1010"/>
<dbReference type="GeneID" id="32804305"/>
<dbReference type="KEGG" id="pen:PSEEN1010"/>
<dbReference type="eggNOG" id="COG1104">
    <property type="taxonomic scope" value="Bacteria"/>
</dbReference>
<dbReference type="HOGENOM" id="CLU_003433_0_2_6"/>
<dbReference type="OrthoDB" id="9808002at2"/>
<dbReference type="UniPathway" id="UPA00266"/>
<dbReference type="Proteomes" id="UP000000658">
    <property type="component" value="Chromosome"/>
</dbReference>
<dbReference type="GO" id="GO:1990221">
    <property type="term" value="C:L-cysteine desulfurase complex"/>
    <property type="evidence" value="ECO:0007669"/>
    <property type="project" value="UniProtKB-ARBA"/>
</dbReference>
<dbReference type="GO" id="GO:0051537">
    <property type="term" value="F:2 iron, 2 sulfur cluster binding"/>
    <property type="evidence" value="ECO:0007669"/>
    <property type="project" value="UniProtKB-UniRule"/>
</dbReference>
<dbReference type="GO" id="GO:0031071">
    <property type="term" value="F:cysteine desulfurase activity"/>
    <property type="evidence" value="ECO:0007669"/>
    <property type="project" value="UniProtKB-UniRule"/>
</dbReference>
<dbReference type="GO" id="GO:0046872">
    <property type="term" value="F:metal ion binding"/>
    <property type="evidence" value="ECO:0007669"/>
    <property type="project" value="UniProtKB-KW"/>
</dbReference>
<dbReference type="GO" id="GO:0030170">
    <property type="term" value="F:pyridoxal phosphate binding"/>
    <property type="evidence" value="ECO:0007669"/>
    <property type="project" value="UniProtKB-UniRule"/>
</dbReference>
<dbReference type="GO" id="GO:0044571">
    <property type="term" value="P:[2Fe-2S] cluster assembly"/>
    <property type="evidence" value="ECO:0007669"/>
    <property type="project" value="UniProtKB-UniRule"/>
</dbReference>
<dbReference type="FunFam" id="3.40.640.10:FF:000003">
    <property type="entry name" value="Cysteine desulfurase IscS"/>
    <property type="match status" value="1"/>
</dbReference>
<dbReference type="FunFam" id="3.90.1150.10:FF:000002">
    <property type="entry name" value="Cysteine desulfurase IscS"/>
    <property type="match status" value="1"/>
</dbReference>
<dbReference type="Gene3D" id="3.90.1150.10">
    <property type="entry name" value="Aspartate Aminotransferase, domain 1"/>
    <property type="match status" value="1"/>
</dbReference>
<dbReference type="Gene3D" id="3.40.640.10">
    <property type="entry name" value="Type I PLP-dependent aspartate aminotransferase-like (Major domain)"/>
    <property type="match status" value="1"/>
</dbReference>
<dbReference type="HAMAP" id="MF_00331">
    <property type="entry name" value="Cys_desulf_IscS"/>
    <property type="match status" value="1"/>
</dbReference>
<dbReference type="InterPro" id="IPR000192">
    <property type="entry name" value="Aminotrans_V_dom"/>
</dbReference>
<dbReference type="InterPro" id="IPR020578">
    <property type="entry name" value="Aminotrans_V_PyrdxlP_BS"/>
</dbReference>
<dbReference type="InterPro" id="IPR010240">
    <property type="entry name" value="Cys_deSase_IscS"/>
</dbReference>
<dbReference type="InterPro" id="IPR016454">
    <property type="entry name" value="Cysteine_dSase"/>
</dbReference>
<dbReference type="InterPro" id="IPR015424">
    <property type="entry name" value="PyrdxlP-dep_Trfase"/>
</dbReference>
<dbReference type="InterPro" id="IPR015421">
    <property type="entry name" value="PyrdxlP-dep_Trfase_major"/>
</dbReference>
<dbReference type="InterPro" id="IPR015422">
    <property type="entry name" value="PyrdxlP-dep_Trfase_small"/>
</dbReference>
<dbReference type="NCBIfam" id="TIGR02006">
    <property type="entry name" value="IscS"/>
    <property type="match status" value="1"/>
</dbReference>
<dbReference type="NCBIfam" id="NF010611">
    <property type="entry name" value="PRK14012.1"/>
    <property type="match status" value="1"/>
</dbReference>
<dbReference type="PANTHER" id="PTHR11601:SF34">
    <property type="entry name" value="CYSTEINE DESULFURASE"/>
    <property type="match status" value="1"/>
</dbReference>
<dbReference type="PANTHER" id="PTHR11601">
    <property type="entry name" value="CYSTEINE DESULFURYLASE FAMILY MEMBER"/>
    <property type="match status" value="1"/>
</dbReference>
<dbReference type="Pfam" id="PF00266">
    <property type="entry name" value="Aminotran_5"/>
    <property type="match status" value="1"/>
</dbReference>
<dbReference type="PIRSF" id="PIRSF005572">
    <property type="entry name" value="NifS"/>
    <property type="match status" value="1"/>
</dbReference>
<dbReference type="SUPFAM" id="SSF53383">
    <property type="entry name" value="PLP-dependent transferases"/>
    <property type="match status" value="1"/>
</dbReference>
<dbReference type="PROSITE" id="PS00595">
    <property type="entry name" value="AA_TRANSFER_CLASS_5"/>
    <property type="match status" value="1"/>
</dbReference>
<protein>
    <recommendedName>
        <fullName evidence="1">Cysteine desulfurase IscS</fullName>
        <ecNumber evidence="1">2.8.1.7</ecNumber>
    </recommendedName>
</protein>